<proteinExistence type="inferred from homology"/>
<protein>
    <recommendedName>
        <fullName>Protein DML1</fullName>
    </recommendedName>
</protein>
<dbReference type="EMBL" id="CR382131">
    <property type="protein sequence ID" value="CAG79364.1"/>
    <property type="molecule type" value="Genomic_DNA"/>
</dbReference>
<dbReference type="RefSeq" id="XP_503773.1">
    <property type="nucleotide sequence ID" value="XM_503773.1"/>
</dbReference>
<dbReference type="FunCoup" id="Q6C6D9">
    <property type="interactions" value="66"/>
</dbReference>
<dbReference type="STRING" id="284591.Q6C6D9"/>
<dbReference type="EnsemblFungi" id="CAG79364">
    <property type="protein sequence ID" value="CAG79364"/>
    <property type="gene ID" value="YALI0_E10285g"/>
</dbReference>
<dbReference type="KEGG" id="yli:2912594"/>
<dbReference type="VEuPathDB" id="FungiDB:YALI0_E10285g"/>
<dbReference type="HOGENOM" id="CLU_022511_2_2_1"/>
<dbReference type="InParanoid" id="Q6C6D9"/>
<dbReference type="OMA" id="SYETGWM"/>
<dbReference type="OrthoDB" id="43618at4891"/>
<dbReference type="Proteomes" id="UP000001300">
    <property type="component" value="Chromosome E"/>
</dbReference>
<dbReference type="GO" id="GO:0005737">
    <property type="term" value="C:cytoplasm"/>
    <property type="evidence" value="ECO:0000318"/>
    <property type="project" value="GO_Central"/>
</dbReference>
<dbReference type="GO" id="GO:0005739">
    <property type="term" value="C:mitochondrion"/>
    <property type="evidence" value="ECO:0000318"/>
    <property type="project" value="GO_Central"/>
</dbReference>
<dbReference type="GO" id="GO:0007005">
    <property type="term" value="P:mitochondrion organization"/>
    <property type="evidence" value="ECO:0000318"/>
    <property type="project" value="GO_Central"/>
</dbReference>
<dbReference type="Gene3D" id="3.40.50.1440">
    <property type="entry name" value="Tubulin/FtsZ, GTPase domain"/>
    <property type="match status" value="1"/>
</dbReference>
<dbReference type="InterPro" id="IPR049942">
    <property type="entry name" value="DML1/Misato"/>
</dbReference>
<dbReference type="InterPro" id="IPR029209">
    <property type="entry name" value="DML1/Misato_tubulin"/>
</dbReference>
<dbReference type="InterPro" id="IPR019605">
    <property type="entry name" value="Misato_II_tubulin-like"/>
</dbReference>
<dbReference type="InterPro" id="IPR036525">
    <property type="entry name" value="Tubulin/FtsZ_GTPase_sf"/>
</dbReference>
<dbReference type="PANTHER" id="PTHR13391">
    <property type="entry name" value="MITOCHONDRIAL DISTRIBUTION REGULATOR MISATO"/>
    <property type="match status" value="1"/>
</dbReference>
<dbReference type="PANTHER" id="PTHR13391:SF0">
    <property type="entry name" value="PROTEIN MISATO HOMOLOG 1"/>
    <property type="match status" value="1"/>
</dbReference>
<dbReference type="Pfam" id="PF10644">
    <property type="entry name" value="Misat_Tub_SegII"/>
    <property type="match status" value="1"/>
</dbReference>
<dbReference type="Pfam" id="PF14881">
    <property type="entry name" value="Tubulin_3"/>
    <property type="match status" value="1"/>
</dbReference>
<dbReference type="SUPFAM" id="SSF52490">
    <property type="entry name" value="Tubulin nucleotide-binding domain-like"/>
    <property type="match status" value="1"/>
</dbReference>
<gene>
    <name type="primary">DML1</name>
    <name type="ordered locus">YALI0E10285g</name>
</gene>
<sequence>MREIITLSFGQTAGHINADYFNSQEHYFPLATKSTSDPTVRFRRGVATDSRTETYNPRLLTWELKGGYGAFQAFNQFYTEGDKSQPQVWNEGEIKEIKEQPVDKNEYQKALDLGRENASQLNTDTTKRWTDYNRLFHHPKTRHQLDNWLFDPDTAPQGIHRGGDQKWTGFDVGVNEWEHVLNSDKEYLDSTLRSWVEECDSLGGLNVVVDDSAWAGVAAKILANYRDDFDAKGTVVTWSVEAKPEKKTRETQKNAIQTTVALSQVSSIYIPVSFPTKTPIDADFDPTSPWHQAALFGLSVYEPVQLMATQRTGGLSLDAMAALLDTTGERNIVSEVGGTLTDVDGDKSTVQYDSRLFQELFLPSRIPPKTPHVFSDLSIARLEDQDDDANSYRLNQPMPEVSSQPEFTKQFVSSKTRLAVTTKPRRTLLDMAKFVSVYERGDEREEMKQELGDMASKYEHGWEEESDDDDDY</sequence>
<feature type="chain" id="PRO_0000285343" description="Protein DML1">
    <location>
        <begin position="1"/>
        <end position="472"/>
    </location>
</feature>
<feature type="region of interest" description="Disordered" evidence="2">
    <location>
        <begin position="441"/>
        <end position="472"/>
    </location>
</feature>
<feature type="compositionally biased region" description="Basic and acidic residues" evidence="2">
    <location>
        <begin position="441"/>
        <end position="463"/>
    </location>
</feature>
<evidence type="ECO:0000250" key="1"/>
<evidence type="ECO:0000256" key="2">
    <source>
        <dbReference type="SAM" id="MobiDB-lite"/>
    </source>
</evidence>
<evidence type="ECO:0000305" key="3"/>
<accession>Q6C6D9</accession>
<keyword id="KW-0496">Mitochondrion</keyword>
<keyword id="KW-1185">Reference proteome</keyword>
<comment type="function">
    <text evidence="1">Involved in the partitioning of the mitochondrial organelle and mitochondrial DNA (mtDNA) inheritance.</text>
</comment>
<comment type="subcellular location">
    <subcellularLocation>
        <location evidence="1">Mitochondrion</location>
    </subcellularLocation>
</comment>
<comment type="similarity">
    <text evidence="3">Belongs to the misato family.</text>
</comment>
<organism>
    <name type="scientific">Yarrowia lipolytica (strain CLIB 122 / E 150)</name>
    <name type="common">Yeast</name>
    <name type="synonym">Candida lipolytica</name>
    <dbReference type="NCBI Taxonomy" id="284591"/>
    <lineage>
        <taxon>Eukaryota</taxon>
        <taxon>Fungi</taxon>
        <taxon>Dikarya</taxon>
        <taxon>Ascomycota</taxon>
        <taxon>Saccharomycotina</taxon>
        <taxon>Dipodascomycetes</taxon>
        <taxon>Dipodascales</taxon>
        <taxon>Dipodascales incertae sedis</taxon>
        <taxon>Yarrowia</taxon>
    </lineage>
</organism>
<reference key="1">
    <citation type="journal article" date="2004" name="Nature">
        <title>Genome evolution in yeasts.</title>
        <authorList>
            <person name="Dujon B."/>
            <person name="Sherman D."/>
            <person name="Fischer G."/>
            <person name="Durrens P."/>
            <person name="Casaregola S."/>
            <person name="Lafontaine I."/>
            <person name="de Montigny J."/>
            <person name="Marck C."/>
            <person name="Neuveglise C."/>
            <person name="Talla E."/>
            <person name="Goffard N."/>
            <person name="Frangeul L."/>
            <person name="Aigle M."/>
            <person name="Anthouard V."/>
            <person name="Babour A."/>
            <person name="Barbe V."/>
            <person name="Barnay S."/>
            <person name="Blanchin S."/>
            <person name="Beckerich J.-M."/>
            <person name="Beyne E."/>
            <person name="Bleykasten C."/>
            <person name="Boisrame A."/>
            <person name="Boyer J."/>
            <person name="Cattolico L."/>
            <person name="Confanioleri F."/>
            <person name="de Daruvar A."/>
            <person name="Despons L."/>
            <person name="Fabre E."/>
            <person name="Fairhead C."/>
            <person name="Ferry-Dumazet H."/>
            <person name="Groppi A."/>
            <person name="Hantraye F."/>
            <person name="Hennequin C."/>
            <person name="Jauniaux N."/>
            <person name="Joyet P."/>
            <person name="Kachouri R."/>
            <person name="Kerrest A."/>
            <person name="Koszul R."/>
            <person name="Lemaire M."/>
            <person name="Lesur I."/>
            <person name="Ma L."/>
            <person name="Muller H."/>
            <person name="Nicaud J.-M."/>
            <person name="Nikolski M."/>
            <person name="Oztas S."/>
            <person name="Ozier-Kalogeropoulos O."/>
            <person name="Pellenz S."/>
            <person name="Potier S."/>
            <person name="Richard G.-F."/>
            <person name="Straub M.-L."/>
            <person name="Suleau A."/>
            <person name="Swennen D."/>
            <person name="Tekaia F."/>
            <person name="Wesolowski-Louvel M."/>
            <person name="Westhof E."/>
            <person name="Wirth B."/>
            <person name="Zeniou-Meyer M."/>
            <person name="Zivanovic Y."/>
            <person name="Bolotin-Fukuhara M."/>
            <person name="Thierry A."/>
            <person name="Bouchier C."/>
            <person name="Caudron B."/>
            <person name="Scarpelli C."/>
            <person name="Gaillardin C."/>
            <person name="Weissenbach J."/>
            <person name="Wincker P."/>
            <person name="Souciet J.-L."/>
        </authorList>
    </citation>
    <scope>NUCLEOTIDE SEQUENCE [LARGE SCALE GENOMIC DNA]</scope>
    <source>
        <strain>CLIB 122 / E 150</strain>
    </source>
</reference>
<name>DML1_YARLI</name>